<reference key="1">
    <citation type="journal article" date="2006" name="Genome Biol.">
        <title>Genomic analysis reveals that Pseudomonas aeruginosa virulence is combinatorial.</title>
        <authorList>
            <person name="Lee D.G."/>
            <person name="Urbach J.M."/>
            <person name="Wu G."/>
            <person name="Liberati N.T."/>
            <person name="Feinbaum R.L."/>
            <person name="Miyata S."/>
            <person name="Diggins L.T."/>
            <person name="He J."/>
            <person name="Saucier M."/>
            <person name="Deziel E."/>
            <person name="Friedman L."/>
            <person name="Li L."/>
            <person name="Grills G."/>
            <person name="Montgomery K."/>
            <person name="Kucherlapati R."/>
            <person name="Rahme L.G."/>
            <person name="Ausubel F.M."/>
        </authorList>
    </citation>
    <scope>NUCLEOTIDE SEQUENCE [LARGE SCALE GENOMIC DNA]</scope>
    <source>
        <strain>UCBPP-PA14</strain>
    </source>
</reference>
<proteinExistence type="inferred from homology"/>
<name>LEXA_PSEAB</name>
<gene>
    <name evidence="1" type="primary">lexA</name>
    <name type="ordered locus">PA14_25160</name>
</gene>
<keyword id="KW-0068">Autocatalytic cleavage</keyword>
<keyword id="KW-0227">DNA damage</keyword>
<keyword id="KW-0234">DNA repair</keyword>
<keyword id="KW-0235">DNA replication</keyword>
<keyword id="KW-0238">DNA-binding</keyword>
<keyword id="KW-0378">Hydrolase</keyword>
<keyword id="KW-0678">Repressor</keyword>
<keyword id="KW-0742">SOS response</keyword>
<keyword id="KW-0804">Transcription</keyword>
<keyword id="KW-0805">Transcription regulation</keyword>
<evidence type="ECO:0000255" key="1">
    <source>
        <dbReference type="HAMAP-Rule" id="MF_00015"/>
    </source>
</evidence>
<accession>Q02PH1</accession>
<organism>
    <name type="scientific">Pseudomonas aeruginosa (strain UCBPP-PA14)</name>
    <dbReference type="NCBI Taxonomy" id="208963"/>
    <lineage>
        <taxon>Bacteria</taxon>
        <taxon>Pseudomonadati</taxon>
        <taxon>Pseudomonadota</taxon>
        <taxon>Gammaproteobacteria</taxon>
        <taxon>Pseudomonadales</taxon>
        <taxon>Pseudomonadaceae</taxon>
        <taxon>Pseudomonas</taxon>
    </lineage>
</organism>
<feature type="chain" id="PRO_1000001318" description="LexA repressor">
    <location>
        <begin position="1"/>
        <end position="204"/>
    </location>
</feature>
<feature type="DNA-binding region" description="H-T-H motif" evidence="1">
    <location>
        <begin position="28"/>
        <end position="48"/>
    </location>
</feature>
<feature type="active site" description="For autocatalytic cleavage activity" evidence="1">
    <location>
        <position position="125"/>
    </location>
</feature>
<feature type="active site" description="For autocatalytic cleavage activity" evidence="1">
    <location>
        <position position="162"/>
    </location>
</feature>
<feature type="site" description="Cleavage; by autolysis" evidence="1">
    <location>
        <begin position="90"/>
        <end position="91"/>
    </location>
</feature>
<sequence>MQKLTPRQAEILSFIKRCLEDHGFPPTRAEIAQELGFKSPNAAEEHLKALARKGAIEMTPGASRGIRIPGFEPHAANDDEGLPVIGRVAAGAPILAEQNIEESCRINPAFFNPRADYLLRVRGMSMKDIGILDGDLLAVHVTREARNGQVVVARIGEEVTVKRFKREGSKVWLLAENPEFAPIEVDLKEQELIIEGLSVGVIRR</sequence>
<protein>
    <recommendedName>
        <fullName evidence="1">LexA repressor</fullName>
        <ecNumber evidence="1">3.4.21.88</ecNumber>
    </recommendedName>
</protein>
<comment type="function">
    <text evidence="1">Represses a number of genes involved in the response to DNA damage (SOS response), including recA and lexA. In the presence of single-stranded DNA, RecA interacts with LexA causing an autocatalytic cleavage which disrupts the DNA-binding part of LexA, leading to derepression of the SOS regulon and eventually DNA repair.</text>
</comment>
<comment type="catalytic activity">
    <reaction evidence="1">
        <text>Hydrolysis of Ala-|-Gly bond in repressor LexA.</text>
        <dbReference type="EC" id="3.4.21.88"/>
    </reaction>
</comment>
<comment type="subunit">
    <text evidence="1">Homodimer.</text>
</comment>
<comment type="similarity">
    <text evidence="1">Belongs to the peptidase S24 family.</text>
</comment>
<dbReference type="EC" id="3.4.21.88" evidence="1"/>
<dbReference type="EMBL" id="CP000438">
    <property type="protein sequence ID" value="ABJ12244.1"/>
    <property type="molecule type" value="Genomic_DNA"/>
</dbReference>
<dbReference type="RefSeq" id="WP_003091196.1">
    <property type="nucleotide sequence ID" value="NZ_CP034244.1"/>
</dbReference>
<dbReference type="SMR" id="Q02PH1"/>
<dbReference type="MEROPS" id="S24.001"/>
<dbReference type="KEGG" id="pau:PA14_25160"/>
<dbReference type="PseudoCAP" id="PA14_25160"/>
<dbReference type="HOGENOM" id="CLU_066192_45_3_6"/>
<dbReference type="BioCyc" id="PAER208963:G1G74-2100-MONOMER"/>
<dbReference type="Proteomes" id="UP000000653">
    <property type="component" value="Chromosome"/>
</dbReference>
<dbReference type="GO" id="GO:0003677">
    <property type="term" value="F:DNA binding"/>
    <property type="evidence" value="ECO:0007669"/>
    <property type="project" value="UniProtKB-UniRule"/>
</dbReference>
<dbReference type="GO" id="GO:0004252">
    <property type="term" value="F:serine-type endopeptidase activity"/>
    <property type="evidence" value="ECO:0007669"/>
    <property type="project" value="UniProtKB-UniRule"/>
</dbReference>
<dbReference type="GO" id="GO:0006281">
    <property type="term" value="P:DNA repair"/>
    <property type="evidence" value="ECO:0007669"/>
    <property type="project" value="UniProtKB-UniRule"/>
</dbReference>
<dbReference type="GO" id="GO:0006260">
    <property type="term" value="P:DNA replication"/>
    <property type="evidence" value="ECO:0007669"/>
    <property type="project" value="UniProtKB-UniRule"/>
</dbReference>
<dbReference type="GO" id="GO:0045892">
    <property type="term" value="P:negative regulation of DNA-templated transcription"/>
    <property type="evidence" value="ECO:0007669"/>
    <property type="project" value="UniProtKB-UniRule"/>
</dbReference>
<dbReference type="GO" id="GO:0006508">
    <property type="term" value="P:proteolysis"/>
    <property type="evidence" value="ECO:0007669"/>
    <property type="project" value="InterPro"/>
</dbReference>
<dbReference type="GO" id="GO:0009432">
    <property type="term" value="P:SOS response"/>
    <property type="evidence" value="ECO:0007669"/>
    <property type="project" value="UniProtKB-UniRule"/>
</dbReference>
<dbReference type="CDD" id="cd06529">
    <property type="entry name" value="S24_LexA-like"/>
    <property type="match status" value="1"/>
</dbReference>
<dbReference type="FunFam" id="1.10.10.10:FF:000009">
    <property type="entry name" value="LexA repressor"/>
    <property type="match status" value="1"/>
</dbReference>
<dbReference type="FunFam" id="2.10.109.10:FF:000001">
    <property type="entry name" value="LexA repressor"/>
    <property type="match status" value="1"/>
</dbReference>
<dbReference type="Gene3D" id="2.10.109.10">
    <property type="entry name" value="Umud Fragment, subunit A"/>
    <property type="match status" value="1"/>
</dbReference>
<dbReference type="Gene3D" id="1.10.10.10">
    <property type="entry name" value="Winged helix-like DNA-binding domain superfamily/Winged helix DNA-binding domain"/>
    <property type="match status" value="1"/>
</dbReference>
<dbReference type="HAMAP" id="MF_00015">
    <property type="entry name" value="LexA"/>
    <property type="match status" value="1"/>
</dbReference>
<dbReference type="InterPro" id="IPR006200">
    <property type="entry name" value="LexA"/>
</dbReference>
<dbReference type="InterPro" id="IPR039418">
    <property type="entry name" value="LexA-like"/>
</dbReference>
<dbReference type="InterPro" id="IPR036286">
    <property type="entry name" value="LexA/Signal_pep-like_sf"/>
</dbReference>
<dbReference type="InterPro" id="IPR006199">
    <property type="entry name" value="LexA_DNA-bd_dom"/>
</dbReference>
<dbReference type="InterPro" id="IPR050077">
    <property type="entry name" value="LexA_repressor"/>
</dbReference>
<dbReference type="InterPro" id="IPR006197">
    <property type="entry name" value="Peptidase_S24_LexA"/>
</dbReference>
<dbReference type="InterPro" id="IPR015927">
    <property type="entry name" value="Peptidase_S24_S26A/B/C"/>
</dbReference>
<dbReference type="InterPro" id="IPR036388">
    <property type="entry name" value="WH-like_DNA-bd_sf"/>
</dbReference>
<dbReference type="InterPro" id="IPR036390">
    <property type="entry name" value="WH_DNA-bd_sf"/>
</dbReference>
<dbReference type="NCBIfam" id="TIGR00498">
    <property type="entry name" value="lexA"/>
    <property type="match status" value="1"/>
</dbReference>
<dbReference type="PANTHER" id="PTHR33516">
    <property type="entry name" value="LEXA REPRESSOR"/>
    <property type="match status" value="1"/>
</dbReference>
<dbReference type="PANTHER" id="PTHR33516:SF2">
    <property type="entry name" value="LEXA REPRESSOR-RELATED"/>
    <property type="match status" value="1"/>
</dbReference>
<dbReference type="Pfam" id="PF01726">
    <property type="entry name" value="LexA_DNA_bind"/>
    <property type="match status" value="1"/>
</dbReference>
<dbReference type="Pfam" id="PF00717">
    <property type="entry name" value="Peptidase_S24"/>
    <property type="match status" value="1"/>
</dbReference>
<dbReference type="PRINTS" id="PR00726">
    <property type="entry name" value="LEXASERPTASE"/>
</dbReference>
<dbReference type="SUPFAM" id="SSF51306">
    <property type="entry name" value="LexA/Signal peptidase"/>
    <property type="match status" value="1"/>
</dbReference>
<dbReference type="SUPFAM" id="SSF46785">
    <property type="entry name" value="Winged helix' DNA-binding domain"/>
    <property type="match status" value="1"/>
</dbReference>